<protein>
    <recommendedName>
        <fullName evidence="1">Elongation factor P</fullName>
        <shortName evidence="1">EF-P</shortName>
    </recommendedName>
</protein>
<gene>
    <name evidence="1" type="primary">efp</name>
    <name type="ordered locus">GK2410</name>
</gene>
<proteinExistence type="inferred from homology"/>
<name>EFP_GEOKA</name>
<accession>Q5KX91</accession>
<organism>
    <name type="scientific">Geobacillus kaustophilus (strain HTA426)</name>
    <dbReference type="NCBI Taxonomy" id="235909"/>
    <lineage>
        <taxon>Bacteria</taxon>
        <taxon>Bacillati</taxon>
        <taxon>Bacillota</taxon>
        <taxon>Bacilli</taxon>
        <taxon>Bacillales</taxon>
        <taxon>Anoxybacillaceae</taxon>
        <taxon>Geobacillus</taxon>
        <taxon>Geobacillus thermoleovorans group</taxon>
    </lineage>
</organism>
<sequence length="185" mass="20857">MISVNDFRTGLTIEVDGEIWRVLEFQHVKPGKGAAFVRSKLRNLRTGAIQERTFRAGEKVNRAQIDTRKMQYLYANGDQHVFMDMETYEQIELPAKQIEHELKFLKENMEVFIMMYQGETIGVELPNTVELKVVETEPGIKGDTASGGSKPAKLETGLVVQVPFFVNEGDTLIINTADGTYVSRA</sequence>
<comment type="function">
    <text evidence="1">Involved in peptide bond synthesis. Stimulates efficient translation and peptide-bond synthesis on native or reconstituted 70S ribosomes in vitro. Probably functions indirectly by altering the affinity of the ribosome for aminoacyl-tRNA, thus increasing their reactivity as acceptors for peptidyl transferase.</text>
</comment>
<comment type="pathway">
    <text evidence="1">Protein biosynthesis; polypeptide chain elongation.</text>
</comment>
<comment type="subcellular location">
    <subcellularLocation>
        <location evidence="1">Cytoplasm</location>
    </subcellularLocation>
</comment>
<comment type="similarity">
    <text evidence="1">Belongs to the elongation factor P family.</text>
</comment>
<keyword id="KW-0963">Cytoplasm</keyword>
<keyword id="KW-0251">Elongation factor</keyword>
<keyword id="KW-0648">Protein biosynthesis</keyword>
<keyword id="KW-1185">Reference proteome</keyword>
<feature type="chain" id="PRO_0000094252" description="Elongation factor P">
    <location>
        <begin position="1"/>
        <end position="185"/>
    </location>
</feature>
<evidence type="ECO:0000255" key="1">
    <source>
        <dbReference type="HAMAP-Rule" id="MF_00141"/>
    </source>
</evidence>
<dbReference type="EMBL" id="BA000043">
    <property type="protein sequence ID" value="BAD76695.1"/>
    <property type="molecule type" value="Genomic_DNA"/>
</dbReference>
<dbReference type="RefSeq" id="WP_011231892.1">
    <property type="nucleotide sequence ID" value="NC_006510.1"/>
</dbReference>
<dbReference type="SMR" id="Q5KX91"/>
<dbReference type="STRING" id="235909.GK2410"/>
<dbReference type="GeneID" id="32064295"/>
<dbReference type="KEGG" id="gka:GK2410"/>
<dbReference type="eggNOG" id="COG0231">
    <property type="taxonomic scope" value="Bacteria"/>
</dbReference>
<dbReference type="HOGENOM" id="CLU_074944_0_1_9"/>
<dbReference type="UniPathway" id="UPA00345"/>
<dbReference type="Proteomes" id="UP000001172">
    <property type="component" value="Chromosome"/>
</dbReference>
<dbReference type="GO" id="GO:0005737">
    <property type="term" value="C:cytoplasm"/>
    <property type="evidence" value="ECO:0007669"/>
    <property type="project" value="UniProtKB-SubCell"/>
</dbReference>
<dbReference type="GO" id="GO:0003746">
    <property type="term" value="F:translation elongation factor activity"/>
    <property type="evidence" value="ECO:0007669"/>
    <property type="project" value="UniProtKB-UniRule"/>
</dbReference>
<dbReference type="GO" id="GO:0043043">
    <property type="term" value="P:peptide biosynthetic process"/>
    <property type="evidence" value="ECO:0007669"/>
    <property type="project" value="InterPro"/>
</dbReference>
<dbReference type="CDD" id="cd04470">
    <property type="entry name" value="S1_EF-P_repeat_1"/>
    <property type="match status" value="1"/>
</dbReference>
<dbReference type="CDD" id="cd05794">
    <property type="entry name" value="S1_EF-P_repeat_2"/>
    <property type="match status" value="1"/>
</dbReference>
<dbReference type="FunFam" id="2.30.30.30:FF:000010">
    <property type="entry name" value="Elongation factor P"/>
    <property type="match status" value="1"/>
</dbReference>
<dbReference type="FunFam" id="2.40.50.140:FF:000004">
    <property type="entry name" value="Elongation factor P"/>
    <property type="match status" value="1"/>
</dbReference>
<dbReference type="FunFam" id="2.40.50.140:FF:000009">
    <property type="entry name" value="Elongation factor P"/>
    <property type="match status" value="1"/>
</dbReference>
<dbReference type="Gene3D" id="2.30.30.30">
    <property type="match status" value="1"/>
</dbReference>
<dbReference type="Gene3D" id="2.40.50.140">
    <property type="entry name" value="Nucleic acid-binding proteins"/>
    <property type="match status" value="2"/>
</dbReference>
<dbReference type="HAMAP" id="MF_00141">
    <property type="entry name" value="EF_P"/>
    <property type="match status" value="1"/>
</dbReference>
<dbReference type="InterPro" id="IPR015365">
    <property type="entry name" value="Elong-fact-P_C"/>
</dbReference>
<dbReference type="InterPro" id="IPR012340">
    <property type="entry name" value="NA-bd_OB-fold"/>
</dbReference>
<dbReference type="InterPro" id="IPR014722">
    <property type="entry name" value="Rib_uL2_dom2"/>
</dbReference>
<dbReference type="InterPro" id="IPR020599">
    <property type="entry name" value="Transl_elong_fac_P/YeiP"/>
</dbReference>
<dbReference type="InterPro" id="IPR013185">
    <property type="entry name" value="Transl_elong_KOW-like"/>
</dbReference>
<dbReference type="InterPro" id="IPR001059">
    <property type="entry name" value="Transl_elong_P/YeiP_cen"/>
</dbReference>
<dbReference type="InterPro" id="IPR013852">
    <property type="entry name" value="Transl_elong_P/YeiP_CS"/>
</dbReference>
<dbReference type="InterPro" id="IPR011768">
    <property type="entry name" value="Transl_elongation_fac_P"/>
</dbReference>
<dbReference type="InterPro" id="IPR008991">
    <property type="entry name" value="Translation_prot_SH3-like_sf"/>
</dbReference>
<dbReference type="NCBIfam" id="TIGR00038">
    <property type="entry name" value="efp"/>
    <property type="match status" value="1"/>
</dbReference>
<dbReference type="NCBIfam" id="NF001810">
    <property type="entry name" value="PRK00529.1"/>
    <property type="match status" value="1"/>
</dbReference>
<dbReference type="PANTHER" id="PTHR30053">
    <property type="entry name" value="ELONGATION FACTOR P"/>
    <property type="match status" value="1"/>
</dbReference>
<dbReference type="PANTHER" id="PTHR30053:SF12">
    <property type="entry name" value="ELONGATION FACTOR P (EF-P) FAMILY PROTEIN"/>
    <property type="match status" value="1"/>
</dbReference>
<dbReference type="Pfam" id="PF01132">
    <property type="entry name" value="EFP"/>
    <property type="match status" value="1"/>
</dbReference>
<dbReference type="Pfam" id="PF08207">
    <property type="entry name" value="EFP_N"/>
    <property type="match status" value="1"/>
</dbReference>
<dbReference type="Pfam" id="PF09285">
    <property type="entry name" value="Elong-fact-P_C"/>
    <property type="match status" value="1"/>
</dbReference>
<dbReference type="PIRSF" id="PIRSF005901">
    <property type="entry name" value="EF-P"/>
    <property type="match status" value="1"/>
</dbReference>
<dbReference type="SMART" id="SM01185">
    <property type="entry name" value="EFP"/>
    <property type="match status" value="1"/>
</dbReference>
<dbReference type="SMART" id="SM00841">
    <property type="entry name" value="Elong-fact-P_C"/>
    <property type="match status" value="1"/>
</dbReference>
<dbReference type="SUPFAM" id="SSF50249">
    <property type="entry name" value="Nucleic acid-binding proteins"/>
    <property type="match status" value="2"/>
</dbReference>
<dbReference type="SUPFAM" id="SSF50104">
    <property type="entry name" value="Translation proteins SH3-like domain"/>
    <property type="match status" value="1"/>
</dbReference>
<dbReference type="PROSITE" id="PS01275">
    <property type="entry name" value="EFP"/>
    <property type="match status" value="1"/>
</dbReference>
<reference key="1">
    <citation type="journal article" date="2004" name="Nucleic Acids Res.">
        <title>Thermoadaptation trait revealed by the genome sequence of thermophilic Geobacillus kaustophilus.</title>
        <authorList>
            <person name="Takami H."/>
            <person name="Takaki Y."/>
            <person name="Chee G.-J."/>
            <person name="Nishi S."/>
            <person name="Shimamura S."/>
            <person name="Suzuki H."/>
            <person name="Matsui S."/>
            <person name="Uchiyama I."/>
        </authorList>
    </citation>
    <scope>NUCLEOTIDE SEQUENCE [LARGE SCALE GENOMIC DNA]</scope>
    <source>
        <strain>HTA426</strain>
    </source>
</reference>